<gene>
    <name type="primary">Capn7</name>
    <name type="synonym">Palbh</name>
</gene>
<accession>Q9R1S8</accession>
<accession>Q9Z0P9</accession>
<organism>
    <name type="scientific">Mus musculus</name>
    <name type="common">Mouse</name>
    <dbReference type="NCBI Taxonomy" id="10090"/>
    <lineage>
        <taxon>Eukaryota</taxon>
        <taxon>Metazoa</taxon>
        <taxon>Chordata</taxon>
        <taxon>Craniata</taxon>
        <taxon>Vertebrata</taxon>
        <taxon>Euteleostomi</taxon>
        <taxon>Mammalia</taxon>
        <taxon>Eutheria</taxon>
        <taxon>Euarchontoglires</taxon>
        <taxon>Glires</taxon>
        <taxon>Rodentia</taxon>
        <taxon>Myomorpha</taxon>
        <taxon>Muroidea</taxon>
        <taxon>Muridae</taxon>
        <taxon>Murinae</taxon>
        <taxon>Mus</taxon>
        <taxon>Mus</taxon>
    </lineage>
</organism>
<comment type="function">
    <text evidence="1">Calcium-regulated non-lysosomal thiol-protease.</text>
</comment>
<comment type="subcellular location">
    <subcellularLocation>
        <location evidence="1">Nucleus</location>
    </subcellularLocation>
</comment>
<comment type="tissue specificity">
    <text>Ubiquitous.</text>
</comment>
<comment type="similarity">
    <text evidence="4">Belongs to the peptidase C2 family.</text>
</comment>
<comment type="sequence caution" evidence="4">
    <conflict type="erroneous initiation">
        <sequence resource="EMBL-CDS" id="CAB39203"/>
    </conflict>
</comment>
<sequence>MDASALERDAVQFARLAVQRDHEGRYSEAVFYYKEAAQALIYAEMAGSSLERIQEKINEYLERVQALHSAVQSKSTDPLKSKHQLDLERAHFLVTQAFDEDEKGNVEDAIELYTEAVELCLKTSSETADKTLQNKLKQLARQALDRAEALSEPLTKPFCKLKSANMKTKTPPVRTHFPLGPNPFVEKPQAFISPQSCDAQGQKYTAEEIEVLRTTSKINGVEYVPFMSVDLRERFAYPMPFCDRLGKLPLSPKQKTTFSKWVRPEDLTNNPTMIYTVSSFSIKQTIVSDCSFVASLAISAAYERRFNKKLITSIIYPQNKDGEPEYNPCGKYMVKLHLNGVPRKVIIDDQLPVDHKGELLCSYSNNKSELWVSLIEKAYMKVMGGYDFPGSNSNIDLHALTGWIPERIAMHSDSQTFSKDNSFRMLYQRFHKGDVLITASTGVMTEAEGEKWGLVPTHAYAVLDIREFKGLRFIQLKNPWSHLRWKGRYSENDVKNWTPELQKYLNFDPRTAQKIDNGIFWISWDDLCQYYDVVYLSWNPALFKESTCIHSTWDAKQGPVKDAYSLANNPQYKLEVQCPQGGAAVWVLLSRHITDKDDFANNREFITMVVYKTDGKKVYYPADPPPYIDGIRINSPHYLTKIKLTTPGTHTFTLVVSQYEKQNTIHYTVRVYSACSFTFSKIPSPYTLSKRINGKWSGQSAGGCGNFQETHKNNPIYQFHIDKTGPLLIELRGPRQYSVGFEVVAVSIMGDPGPHGFQRKSSGDYRCGFCYLELENIPAGIFNIIPSTFLPKQEGPFFLDFNSTVPIKTTQLQ</sequence>
<protein>
    <recommendedName>
        <fullName>Calpain-7</fullName>
        <ecNumber>3.4.22.-</ecNumber>
    </recommendedName>
    <alternativeName>
        <fullName>PalB homolog</fullName>
        <shortName>PalBH</shortName>
    </alternativeName>
</protein>
<proteinExistence type="evidence at transcript level"/>
<name>CAN7_MOUSE</name>
<evidence type="ECO:0000250" key="1"/>
<evidence type="ECO:0000250" key="2">
    <source>
        <dbReference type="UniProtKB" id="Q9Y6W3"/>
    </source>
</evidence>
<evidence type="ECO:0000255" key="3">
    <source>
        <dbReference type="PROSITE-ProRule" id="PRU00239"/>
    </source>
</evidence>
<evidence type="ECO:0000305" key="4"/>
<keyword id="KW-0007">Acetylation</keyword>
<keyword id="KW-0378">Hydrolase</keyword>
<keyword id="KW-0539">Nucleus</keyword>
<keyword id="KW-0597">Phosphoprotein</keyword>
<keyword id="KW-0645">Protease</keyword>
<keyword id="KW-1185">Reference proteome</keyword>
<keyword id="KW-0677">Repeat</keyword>
<keyword id="KW-0788">Thiol protease</keyword>
<reference key="1">
    <citation type="journal article" date="2001" name="Biochim. Biophys. Acta">
        <title>Molecular cloning of PalBH, a mammalian homologue of the Aspergillus atypical calpain PalB.</title>
        <authorList>
            <person name="Futai E."/>
            <person name="Kubo T."/>
            <person name="Sorimachi H."/>
            <person name="Suzuki K."/>
            <person name="Maeda T."/>
        </authorList>
    </citation>
    <scope>NUCLEOTIDE SEQUENCE [MRNA]</scope>
</reference>
<reference key="2">
    <citation type="journal article" date="1999" name="Mamm. Genome">
        <title>Capn7: a highly divergent vertebrate calpain with a novel C-terminal domain.</title>
        <authorList>
            <person name="Franz T."/>
            <person name="Vingron M."/>
            <person name="Boehm T."/>
            <person name="Dear T.N."/>
        </authorList>
    </citation>
    <scope>NUCLEOTIDE SEQUENCE [MRNA] OF 11-813</scope>
</reference>
<dbReference type="EC" id="3.4.22.-"/>
<dbReference type="EMBL" id="AB028640">
    <property type="protein sequence ID" value="BAA78731.1"/>
    <property type="molecule type" value="mRNA"/>
</dbReference>
<dbReference type="EMBL" id="AJ012475">
    <property type="protein sequence ID" value="CAB39203.1"/>
    <property type="status" value="ALT_INIT"/>
    <property type="molecule type" value="mRNA"/>
</dbReference>
<dbReference type="CCDS" id="CCDS26911.1"/>
<dbReference type="RefSeq" id="NP_033926.1">
    <property type="nucleotide sequence ID" value="NM_009796.4"/>
</dbReference>
<dbReference type="RefSeq" id="XP_017171318.1">
    <property type="nucleotide sequence ID" value="XM_017315829.1"/>
</dbReference>
<dbReference type="SMR" id="Q9R1S8"/>
<dbReference type="BioGRID" id="198476">
    <property type="interactions" value="3"/>
</dbReference>
<dbReference type="FunCoup" id="Q9R1S8">
    <property type="interactions" value="2834"/>
</dbReference>
<dbReference type="STRING" id="10090.ENSMUSP00000022451"/>
<dbReference type="MEROPS" id="C02.029"/>
<dbReference type="iPTMnet" id="Q9R1S8"/>
<dbReference type="PhosphoSitePlus" id="Q9R1S8"/>
<dbReference type="PaxDb" id="10090-ENSMUSP00000022451"/>
<dbReference type="ProteomicsDB" id="281766"/>
<dbReference type="Pumba" id="Q9R1S8"/>
<dbReference type="Antibodypedia" id="11065">
    <property type="antibodies" value="106 antibodies from 23 providers"/>
</dbReference>
<dbReference type="DNASU" id="12339"/>
<dbReference type="Ensembl" id="ENSMUST00000022451.14">
    <property type="protein sequence ID" value="ENSMUSP00000022451.8"/>
    <property type="gene ID" value="ENSMUSG00000021893.15"/>
</dbReference>
<dbReference type="GeneID" id="12339"/>
<dbReference type="KEGG" id="mmu:12339"/>
<dbReference type="UCSC" id="uc007sxm.1">
    <property type="organism name" value="mouse"/>
</dbReference>
<dbReference type="AGR" id="MGI:1338030"/>
<dbReference type="CTD" id="23473"/>
<dbReference type="MGI" id="MGI:1338030">
    <property type="gene designation" value="Capn7"/>
</dbReference>
<dbReference type="VEuPathDB" id="HostDB:ENSMUSG00000021893"/>
<dbReference type="eggNOG" id="KOG0045">
    <property type="taxonomic scope" value="Eukaryota"/>
</dbReference>
<dbReference type="GeneTree" id="ENSGT00940000155892"/>
<dbReference type="HOGENOM" id="CLU_006770_2_0_1"/>
<dbReference type="InParanoid" id="Q9R1S8"/>
<dbReference type="OMA" id="GDYRRGC"/>
<dbReference type="OrthoDB" id="167576at2759"/>
<dbReference type="PhylomeDB" id="Q9R1S8"/>
<dbReference type="TreeFam" id="TF322245"/>
<dbReference type="BRENDA" id="3.4.22.B27">
    <property type="organism ID" value="3474"/>
</dbReference>
<dbReference type="Reactome" id="R-MMU-1474228">
    <property type="pathway name" value="Degradation of the extracellular matrix"/>
</dbReference>
<dbReference type="BioGRID-ORCS" id="12339">
    <property type="hits" value="1 hit in 79 CRISPR screens"/>
</dbReference>
<dbReference type="ChiTaRS" id="Capn7">
    <property type="organism name" value="mouse"/>
</dbReference>
<dbReference type="PRO" id="PR:Q9R1S8"/>
<dbReference type="Proteomes" id="UP000000589">
    <property type="component" value="Chromosome 14"/>
</dbReference>
<dbReference type="RNAct" id="Q9R1S8">
    <property type="molecule type" value="protein"/>
</dbReference>
<dbReference type="Bgee" id="ENSMUSG00000021893">
    <property type="expression patterns" value="Expressed in metanephric cortical collecting duct and 269 other cell types or tissues"/>
</dbReference>
<dbReference type="ExpressionAtlas" id="Q9R1S8">
    <property type="expression patterns" value="baseline and differential"/>
</dbReference>
<dbReference type="GO" id="GO:0005813">
    <property type="term" value="C:centrosome"/>
    <property type="evidence" value="ECO:0007669"/>
    <property type="project" value="Ensembl"/>
</dbReference>
<dbReference type="GO" id="GO:0005829">
    <property type="term" value="C:cytosol"/>
    <property type="evidence" value="ECO:0007669"/>
    <property type="project" value="Ensembl"/>
</dbReference>
<dbReference type="GO" id="GO:0005634">
    <property type="term" value="C:nucleus"/>
    <property type="evidence" value="ECO:0007669"/>
    <property type="project" value="UniProtKB-SubCell"/>
</dbReference>
<dbReference type="GO" id="GO:0004198">
    <property type="term" value="F:calcium-dependent cysteine-type endopeptidase activity"/>
    <property type="evidence" value="ECO:0007669"/>
    <property type="project" value="InterPro"/>
</dbReference>
<dbReference type="GO" id="GO:0090541">
    <property type="term" value="F:MIT domain binding"/>
    <property type="evidence" value="ECO:0007669"/>
    <property type="project" value="Ensembl"/>
</dbReference>
<dbReference type="GO" id="GO:0010634">
    <property type="term" value="P:positive regulation of epithelial cell migration"/>
    <property type="evidence" value="ECO:0007669"/>
    <property type="project" value="Ensembl"/>
</dbReference>
<dbReference type="GO" id="GO:0006508">
    <property type="term" value="P:proteolysis"/>
    <property type="evidence" value="ECO:0000315"/>
    <property type="project" value="CACAO"/>
</dbReference>
<dbReference type="GO" id="GO:0097264">
    <property type="term" value="P:self proteolysis"/>
    <property type="evidence" value="ECO:0007669"/>
    <property type="project" value="Ensembl"/>
</dbReference>
<dbReference type="CDD" id="cd00044">
    <property type="entry name" value="CysPc"/>
    <property type="match status" value="1"/>
</dbReference>
<dbReference type="CDD" id="cd02681">
    <property type="entry name" value="MIT_calpain7_1"/>
    <property type="match status" value="1"/>
</dbReference>
<dbReference type="FunFam" id="2.60.120.380:FF:000007">
    <property type="entry name" value="Calpain 7"/>
    <property type="match status" value="1"/>
</dbReference>
<dbReference type="FunFam" id="3.90.70.10:FF:000069">
    <property type="entry name" value="Calpain 7"/>
    <property type="match status" value="1"/>
</dbReference>
<dbReference type="Gene3D" id="2.60.120.380">
    <property type="match status" value="2"/>
</dbReference>
<dbReference type="Gene3D" id="3.90.70.10">
    <property type="entry name" value="Cysteine proteinases"/>
    <property type="match status" value="1"/>
</dbReference>
<dbReference type="Gene3D" id="1.20.58.80">
    <property type="entry name" value="Phosphotransferase system, lactose/cellobiose-type IIA subunit"/>
    <property type="match status" value="2"/>
</dbReference>
<dbReference type="InterPro" id="IPR022684">
    <property type="entry name" value="Calpain_cysteine_protease"/>
</dbReference>
<dbReference type="InterPro" id="IPR022682">
    <property type="entry name" value="Calpain_domain_III"/>
</dbReference>
<dbReference type="InterPro" id="IPR022683">
    <property type="entry name" value="Calpain_III"/>
</dbReference>
<dbReference type="InterPro" id="IPR036213">
    <property type="entry name" value="Calpain_III_sf"/>
</dbReference>
<dbReference type="InterPro" id="IPR007330">
    <property type="entry name" value="MIT_dom"/>
</dbReference>
<dbReference type="InterPro" id="IPR036181">
    <property type="entry name" value="MIT_dom_sf"/>
</dbReference>
<dbReference type="InterPro" id="IPR051297">
    <property type="entry name" value="PalB/RIM13_Calpain-like"/>
</dbReference>
<dbReference type="InterPro" id="IPR038765">
    <property type="entry name" value="Papain-like_cys_pep_sf"/>
</dbReference>
<dbReference type="InterPro" id="IPR001300">
    <property type="entry name" value="Peptidase_C2_calpain_cat"/>
</dbReference>
<dbReference type="PANTHER" id="PTHR46143">
    <property type="entry name" value="CALPAIN-7"/>
    <property type="match status" value="1"/>
</dbReference>
<dbReference type="PANTHER" id="PTHR46143:SF1">
    <property type="entry name" value="CALPAIN-7"/>
    <property type="match status" value="1"/>
</dbReference>
<dbReference type="Pfam" id="PF01067">
    <property type="entry name" value="Calpain_III"/>
    <property type="match status" value="1"/>
</dbReference>
<dbReference type="Pfam" id="PF04212">
    <property type="entry name" value="MIT"/>
    <property type="match status" value="2"/>
</dbReference>
<dbReference type="Pfam" id="PF00648">
    <property type="entry name" value="Peptidase_C2"/>
    <property type="match status" value="1"/>
</dbReference>
<dbReference type="PRINTS" id="PR00704">
    <property type="entry name" value="CALPAIN"/>
</dbReference>
<dbReference type="SMART" id="SM00720">
    <property type="entry name" value="calpain_III"/>
    <property type="match status" value="1"/>
</dbReference>
<dbReference type="SMART" id="SM00230">
    <property type="entry name" value="CysPc"/>
    <property type="match status" value="1"/>
</dbReference>
<dbReference type="SMART" id="SM00745">
    <property type="entry name" value="MIT"/>
    <property type="match status" value="2"/>
</dbReference>
<dbReference type="SUPFAM" id="SSF49758">
    <property type="entry name" value="Calpain large subunit, middle domain (domain III)"/>
    <property type="match status" value="2"/>
</dbReference>
<dbReference type="SUPFAM" id="SSF54001">
    <property type="entry name" value="Cysteine proteinases"/>
    <property type="match status" value="1"/>
</dbReference>
<dbReference type="SUPFAM" id="SSF116846">
    <property type="entry name" value="MIT domain"/>
    <property type="match status" value="2"/>
</dbReference>
<dbReference type="PROSITE" id="PS50203">
    <property type="entry name" value="CALPAIN_CAT"/>
    <property type="match status" value="1"/>
</dbReference>
<feature type="chain" id="PRO_0000207721" description="Calpain-7">
    <location>
        <begin position="1"/>
        <end position="813"/>
    </location>
</feature>
<feature type="domain" description="Calpain catalytic" evidence="3">
    <location>
        <begin position="232"/>
        <end position="540"/>
    </location>
</feature>
<feature type="region of interest" description="Domain III">
    <location>
        <begin position="541"/>
        <end position="701"/>
    </location>
</feature>
<feature type="region of interest" description="Domain N">
    <location>
        <begin position="702"/>
        <end position="813"/>
    </location>
</feature>
<feature type="active site" evidence="3">
    <location>
        <position position="290"/>
    </location>
</feature>
<feature type="active site" evidence="3">
    <location>
        <position position="458"/>
    </location>
</feature>
<feature type="active site" evidence="3">
    <location>
        <position position="478"/>
    </location>
</feature>
<feature type="modified residue" description="N-acetylmethionine" evidence="2">
    <location>
        <position position="1"/>
    </location>
</feature>
<feature type="modified residue" description="Phosphothreonine" evidence="2">
    <location>
        <position position="95"/>
    </location>
</feature>